<organism>
    <name type="scientific">Escherichia coli (strain K12)</name>
    <dbReference type="NCBI Taxonomy" id="83333"/>
    <lineage>
        <taxon>Bacteria</taxon>
        <taxon>Pseudomonadati</taxon>
        <taxon>Pseudomonadota</taxon>
        <taxon>Gammaproteobacteria</taxon>
        <taxon>Enterobacterales</taxon>
        <taxon>Enterobacteriaceae</taxon>
        <taxon>Escherichia</taxon>
    </lineage>
</organism>
<comment type="function">
    <text evidence="3">Plays a role in L-cysteine detoxification. Binds to the dlsT(yhaO)-yhaM operon promoter in the presence but not absence of L-cysteine; activates transcription from the dlsT(yhaO)-yhaM operon. No other DNA target was identified in strain K12 / BW25113. Thiosulfate does not activate its transcription function. Overexpression doubles hydrogen sulfide production in the presence of cysteine.</text>
</comment>
<comment type="disruption phenotype">
    <text evidence="2">Slightly increased sensitivity to excess L-cysteine, the effect is more pronounced in M9 minimal medium. Loss of expression of dlsT(yhaO)-yhaM operon. Cells no longer produce hydrogen sulfide in the presence of excess cysteine.</text>
</comment>
<comment type="sequence caution" evidence="5">
    <conflict type="erroneous initiation">
        <sequence resource="EMBL-CDS" id="AAB40203"/>
    </conflict>
    <text>Extended N-terminus.</text>
</comment>
<reference key="1">
    <citation type="submission" date="1996-10" db="EMBL/GenBank/DDBJ databases">
        <authorList>
            <person name="Hatada E."/>
            <person name="Ohmori H."/>
            <person name="Qiao Y."/>
            <person name="Tsuji M."/>
            <person name="Fukuda R."/>
        </authorList>
    </citation>
    <scope>NUCLEOTIDE SEQUENCE [GENOMIC DNA]</scope>
    <source>
        <strain>K12 / W3110 / ATCC 27325 / DSM 5911</strain>
    </source>
</reference>
<reference key="2">
    <citation type="submission" date="1997-01" db="EMBL/GenBank/DDBJ databases">
        <title>Sequence of minutes 4-25 of Escherichia coli.</title>
        <authorList>
            <person name="Chung E."/>
            <person name="Allen E."/>
            <person name="Araujo R."/>
            <person name="Aparicio A.M."/>
            <person name="Davis K."/>
            <person name="Duncan M."/>
            <person name="Federspiel N."/>
            <person name="Hyman R."/>
            <person name="Kalman S."/>
            <person name="Komp C."/>
            <person name="Kurdi O."/>
            <person name="Lew H."/>
            <person name="Lin D."/>
            <person name="Namath A."/>
            <person name="Oefner P."/>
            <person name="Roberts D."/>
            <person name="Schramm S."/>
            <person name="Davis R.W."/>
        </authorList>
    </citation>
    <scope>NUCLEOTIDE SEQUENCE [LARGE SCALE GENOMIC DNA]</scope>
    <source>
        <strain>K12 / MG1655 / ATCC 47076</strain>
    </source>
</reference>
<reference key="3">
    <citation type="journal article" date="1997" name="Science">
        <title>The complete genome sequence of Escherichia coli K-12.</title>
        <authorList>
            <person name="Blattner F.R."/>
            <person name="Plunkett G. III"/>
            <person name="Bloch C.A."/>
            <person name="Perna N.T."/>
            <person name="Burland V."/>
            <person name="Riley M."/>
            <person name="Collado-Vides J."/>
            <person name="Glasner J.D."/>
            <person name="Rode C.K."/>
            <person name="Mayhew G.F."/>
            <person name="Gregor J."/>
            <person name="Davis N.W."/>
            <person name="Kirkpatrick H.A."/>
            <person name="Goeden M.A."/>
            <person name="Rose D.J."/>
            <person name="Mau B."/>
            <person name="Shao Y."/>
        </authorList>
    </citation>
    <scope>NUCLEOTIDE SEQUENCE [LARGE SCALE GENOMIC DNA]</scope>
    <source>
        <strain>K12 / MG1655 / ATCC 47076</strain>
    </source>
</reference>
<reference key="4">
    <citation type="journal article" date="2006" name="Mol. Syst. Biol.">
        <title>Highly accurate genome sequences of Escherichia coli K-12 strains MG1655 and W3110.</title>
        <authorList>
            <person name="Hayashi K."/>
            <person name="Morooka N."/>
            <person name="Yamamoto Y."/>
            <person name="Fujita K."/>
            <person name="Isono K."/>
            <person name="Choi S."/>
            <person name="Ohtsubo E."/>
            <person name="Baba T."/>
            <person name="Wanner B.L."/>
            <person name="Mori H."/>
            <person name="Horiuchi T."/>
        </authorList>
    </citation>
    <scope>NUCLEOTIDE SEQUENCE [LARGE SCALE GENOMIC DNA]</scope>
    <source>
        <strain>K12 / W3110 / ATCC 27325 / DSM 5911</strain>
    </source>
</reference>
<reference key="5">
    <citation type="submission" date="1995-10" db="EMBL/GenBank/DDBJ databases">
        <authorList>
            <person name="Patzer S.I."/>
            <person name="Hantke K."/>
        </authorList>
    </citation>
    <scope>NUCLEOTIDE SEQUENCE [GENOMIC DNA] OF 1-55</scope>
    <source>
        <strain>K12 / MC4100 / ATCC 35695 / DSM 6574</strain>
    </source>
</reference>
<reference key="6">
    <citation type="journal article" date="1993" name="Gene">
        <title>Cloning and organization of the abc and mdl genes of Escherichia coli: relationship to eukaryotic multidrug resistance.</title>
        <authorList>
            <person name="Allikmets R."/>
            <person name="Gerrard B.C."/>
            <person name="Court D."/>
            <person name="Dean M.C."/>
        </authorList>
    </citation>
    <scope>NUCLEOTIDE SEQUENCE [GENOMIC DNA] OF 126-152</scope>
    <source>
        <strain>TAP90 / ATCC 47037</strain>
    </source>
</reference>
<reference key="7">
    <citation type="unpublished observations" date="1996-01">
        <authorList>
            <person name="Robison K."/>
            <person name="Rudd K.E."/>
        </authorList>
    </citation>
    <scope>IDENTIFICATION</scope>
</reference>
<reference key="8">
    <citation type="journal article" date="2016" name="Microbiology">
        <title>Transcription factor DecR (YbaO) controls detoxification of L-cysteine in Escherichia coli.</title>
        <authorList>
            <person name="Shimada T."/>
            <person name="Tanaka K."/>
            <person name="Ishihama A."/>
        </authorList>
    </citation>
    <scope>FUNCTION</scope>
    <scope>DISRUPTION PHENOTYPE</scope>
    <scope>DNA-BINDING</scope>
    <source>
        <strain>K12 / BW25113</strain>
    </source>
</reference>
<sequence>MLDKIDRKLLALLQQDCTLSLQALAEAVNLTTTPCWKRLKRLEDDGILIGKVALLDPEKIGLGLTAFVLIKTQHHSSEWYCRFVTVVTEMPEVLGFWRMAGEYDYLMRVQVADMKRYDEFYKRLVNSVPGLSDVTSSFAMEQIKYTTSLPIE</sequence>
<protein>
    <recommendedName>
        <fullName evidence="4">DNA-binding transcriptional activator DecR</fullName>
    </recommendedName>
</protein>
<feature type="chain" id="PRO_0000111747" description="DNA-binding transcriptional activator DecR">
    <location>
        <begin position="1"/>
        <end position="152"/>
    </location>
</feature>
<feature type="domain" description="HTH asnC-type" evidence="1">
    <location>
        <begin position="2"/>
        <end position="63"/>
    </location>
</feature>
<feature type="DNA-binding region" description="H-T-H motif" evidence="1">
    <location>
        <begin position="21"/>
        <end position="40"/>
    </location>
</feature>
<proteinExistence type="evidence at protein level"/>
<accession>P0ACJ5</accession>
<accession>P54986</accession>
<accession>P71209</accession>
<accession>P77575</accession>
<accession>Q2MBX9</accession>
<name>DECR_ECOLI</name>
<keyword id="KW-0010">Activator</keyword>
<keyword id="KW-0238">DNA-binding</keyword>
<keyword id="KW-1185">Reference proteome</keyword>
<keyword id="KW-0804">Transcription</keyword>
<keyword id="KW-0805">Transcription regulation</keyword>
<evidence type="ECO:0000255" key="1">
    <source>
        <dbReference type="PROSITE-ProRule" id="PRU00319"/>
    </source>
</evidence>
<evidence type="ECO:0000269" key="2">
    <source>
    </source>
</evidence>
<evidence type="ECO:0000269" key="3">
    <source ref="1"/>
</evidence>
<evidence type="ECO:0000303" key="4">
    <source>
    </source>
</evidence>
<evidence type="ECO:0000305" key="5"/>
<gene>
    <name evidence="4" type="primary">decR</name>
    <name type="synonym">ybaO</name>
    <name type="ordered locus">b0447</name>
    <name type="ordered locus">JW0437</name>
</gene>
<dbReference type="EMBL" id="D82943">
    <property type="protein sequence ID" value="BAA11651.1"/>
    <property type="molecule type" value="Genomic_DNA"/>
</dbReference>
<dbReference type="EMBL" id="U82664">
    <property type="protein sequence ID" value="AAB40203.1"/>
    <property type="status" value="ALT_INIT"/>
    <property type="molecule type" value="Genomic_DNA"/>
</dbReference>
<dbReference type="EMBL" id="U00096">
    <property type="protein sequence ID" value="AAC73550.2"/>
    <property type="molecule type" value="Genomic_DNA"/>
</dbReference>
<dbReference type="EMBL" id="Z54355">
    <property type="status" value="NOT_ANNOTATED_CDS"/>
    <property type="molecule type" value="Genomic_DNA"/>
</dbReference>
<dbReference type="EMBL" id="L08627">
    <property type="status" value="NOT_ANNOTATED_CDS"/>
    <property type="molecule type" value="Unassigned_DNA"/>
</dbReference>
<dbReference type="EMBL" id="AP009048">
    <property type="protein sequence ID" value="BAE76227.1"/>
    <property type="molecule type" value="Genomic_DNA"/>
</dbReference>
<dbReference type="RefSeq" id="NP_414981.4">
    <property type="nucleotide sequence ID" value="NC_000913.3"/>
</dbReference>
<dbReference type="RefSeq" id="WP_000884589.1">
    <property type="nucleotide sequence ID" value="NZ_STEB01000007.1"/>
</dbReference>
<dbReference type="SMR" id="P0ACJ5"/>
<dbReference type="BioGRID" id="4260653">
    <property type="interactions" value="100"/>
</dbReference>
<dbReference type="DIP" id="DIP-11303N"/>
<dbReference type="FunCoup" id="P0ACJ5">
    <property type="interactions" value="114"/>
</dbReference>
<dbReference type="IntAct" id="P0ACJ5">
    <property type="interactions" value="3"/>
</dbReference>
<dbReference type="STRING" id="511145.b0447"/>
<dbReference type="jPOST" id="P0ACJ5"/>
<dbReference type="PaxDb" id="511145-b0447"/>
<dbReference type="EnsemblBacteria" id="AAC73550">
    <property type="protein sequence ID" value="AAC73550"/>
    <property type="gene ID" value="b0447"/>
</dbReference>
<dbReference type="GeneID" id="86945361"/>
<dbReference type="GeneID" id="945091"/>
<dbReference type="KEGG" id="ecj:JW0437"/>
<dbReference type="KEGG" id="eco:b0447"/>
<dbReference type="KEGG" id="ecoc:C3026_02190"/>
<dbReference type="PATRIC" id="fig|1411691.4.peg.1829"/>
<dbReference type="EchoBASE" id="EB3009"/>
<dbReference type="eggNOG" id="COG1522">
    <property type="taxonomic scope" value="Bacteria"/>
</dbReference>
<dbReference type="HOGENOM" id="CLU_091233_0_2_6"/>
<dbReference type="InParanoid" id="P0ACJ5"/>
<dbReference type="OMA" id="STTPCWK"/>
<dbReference type="OrthoDB" id="166264at2"/>
<dbReference type="PhylomeDB" id="P0ACJ5"/>
<dbReference type="BioCyc" id="EcoCyc:G6247-MONOMER"/>
<dbReference type="PRO" id="PR:P0ACJ5"/>
<dbReference type="Proteomes" id="UP000000625">
    <property type="component" value="Chromosome"/>
</dbReference>
<dbReference type="GO" id="GO:0005829">
    <property type="term" value="C:cytosol"/>
    <property type="evidence" value="ECO:0000318"/>
    <property type="project" value="GO_Central"/>
</dbReference>
<dbReference type="GO" id="GO:0043565">
    <property type="term" value="F:sequence-specific DNA binding"/>
    <property type="evidence" value="ECO:0000318"/>
    <property type="project" value="GO_Central"/>
</dbReference>
<dbReference type="GO" id="GO:0009093">
    <property type="term" value="P:cysteine catabolic process"/>
    <property type="evidence" value="ECO:0000315"/>
    <property type="project" value="UniProtKB"/>
</dbReference>
<dbReference type="GO" id="GO:2000144">
    <property type="term" value="P:positive regulation of DNA-templated transcription initiation"/>
    <property type="evidence" value="ECO:0000314"/>
    <property type="project" value="EcoCyc"/>
</dbReference>
<dbReference type="GO" id="GO:0043200">
    <property type="term" value="P:response to amino acid"/>
    <property type="evidence" value="ECO:0000318"/>
    <property type="project" value="GO_Central"/>
</dbReference>
<dbReference type="CDD" id="cd00090">
    <property type="entry name" value="HTH_ARSR"/>
    <property type="match status" value="1"/>
</dbReference>
<dbReference type="FunFam" id="1.10.10.10:FF:000114">
    <property type="entry name" value="Lrp/AsnC family transcriptional regulator"/>
    <property type="match status" value="1"/>
</dbReference>
<dbReference type="FunFam" id="3.30.70.920:FF:000005">
    <property type="entry name" value="Lrp/AsnC family transcriptional regulator"/>
    <property type="match status" value="1"/>
</dbReference>
<dbReference type="Gene3D" id="3.30.70.920">
    <property type="match status" value="1"/>
</dbReference>
<dbReference type="Gene3D" id="1.10.10.10">
    <property type="entry name" value="Winged helix-like DNA-binding domain superfamily/Winged helix DNA-binding domain"/>
    <property type="match status" value="1"/>
</dbReference>
<dbReference type="InterPro" id="IPR011991">
    <property type="entry name" value="ArsR-like_HTH"/>
</dbReference>
<dbReference type="InterPro" id="IPR000485">
    <property type="entry name" value="AsnC-type_HTH_dom"/>
</dbReference>
<dbReference type="InterPro" id="IPR011008">
    <property type="entry name" value="Dimeric_a/b-barrel"/>
</dbReference>
<dbReference type="InterPro" id="IPR019888">
    <property type="entry name" value="Tscrpt_reg_AsnC-like"/>
</dbReference>
<dbReference type="InterPro" id="IPR019887">
    <property type="entry name" value="Tscrpt_reg_AsnC/Lrp_C"/>
</dbReference>
<dbReference type="InterPro" id="IPR019885">
    <property type="entry name" value="Tscrpt_reg_HTH_AsnC-type_CS"/>
</dbReference>
<dbReference type="InterPro" id="IPR036388">
    <property type="entry name" value="WH-like_DNA-bd_sf"/>
</dbReference>
<dbReference type="InterPro" id="IPR036390">
    <property type="entry name" value="WH_DNA-bd_sf"/>
</dbReference>
<dbReference type="PANTHER" id="PTHR30154:SF17">
    <property type="entry name" value="DNA-BINDING TRANSCRIPTIONAL ACTIVATOR DECR"/>
    <property type="match status" value="1"/>
</dbReference>
<dbReference type="PANTHER" id="PTHR30154">
    <property type="entry name" value="LEUCINE-RESPONSIVE REGULATORY PROTEIN"/>
    <property type="match status" value="1"/>
</dbReference>
<dbReference type="Pfam" id="PF01037">
    <property type="entry name" value="AsnC_trans_reg"/>
    <property type="match status" value="1"/>
</dbReference>
<dbReference type="Pfam" id="PF13412">
    <property type="entry name" value="HTH_24"/>
    <property type="match status" value="1"/>
</dbReference>
<dbReference type="PRINTS" id="PR00033">
    <property type="entry name" value="HTHASNC"/>
</dbReference>
<dbReference type="SMART" id="SM00344">
    <property type="entry name" value="HTH_ASNC"/>
    <property type="match status" value="1"/>
</dbReference>
<dbReference type="SUPFAM" id="SSF54909">
    <property type="entry name" value="Dimeric alpha+beta barrel"/>
    <property type="match status" value="1"/>
</dbReference>
<dbReference type="SUPFAM" id="SSF46785">
    <property type="entry name" value="Winged helix' DNA-binding domain"/>
    <property type="match status" value="1"/>
</dbReference>
<dbReference type="PROSITE" id="PS00519">
    <property type="entry name" value="HTH_ASNC_1"/>
    <property type="match status" value="1"/>
</dbReference>
<dbReference type="PROSITE" id="PS50956">
    <property type="entry name" value="HTH_ASNC_2"/>
    <property type="match status" value="1"/>
</dbReference>